<name>WHIA_BACLD</name>
<evidence type="ECO:0000255" key="1">
    <source>
        <dbReference type="HAMAP-Rule" id="MF_01420"/>
    </source>
</evidence>
<feature type="chain" id="PRO_0000376440" description="Probable cell division protein WhiA">
    <location>
        <begin position="1"/>
        <end position="316"/>
    </location>
</feature>
<feature type="DNA-binding region" description="H-T-H motif" evidence="1">
    <location>
        <begin position="275"/>
        <end position="309"/>
    </location>
</feature>
<comment type="function">
    <text evidence="1">Involved in cell division and chromosome segregation.</text>
</comment>
<comment type="similarity">
    <text evidence="1">Belongs to the WhiA family.</text>
</comment>
<organism>
    <name type="scientific">Bacillus licheniformis (strain ATCC 14580 / DSM 13 / JCM 2505 / CCUG 7422 / NBRC 12200 / NCIMB 9375 / NCTC 10341 / NRRL NRS-1264 / Gibson 46)</name>
    <dbReference type="NCBI Taxonomy" id="279010"/>
    <lineage>
        <taxon>Bacteria</taxon>
        <taxon>Bacillati</taxon>
        <taxon>Bacillota</taxon>
        <taxon>Bacilli</taxon>
        <taxon>Bacillales</taxon>
        <taxon>Bacillaceae</taxon>
        <taxon>Bacillus</taxon>
    </lineage>
</organism>
<proteinExistence type="inferred from homology"/>
<sequence length="316" mass="36194">MSFASETKKELTNLEVKDCCAKAELSALIRMNGSLSFSNRKVVLDVQTENAAIARRIYTLLKKQYDVSVELLVRKKMRLKKNNVYIVRLIENAKPILEDLKILGDNFVIARNISEDLVKKRCCKRSYMRGAFLAGGSVNNPETSSYHLEIFSLYKEHNDSLCRLMNQFHLNSKTLERKKGYITYLKEAEKITEFLNVIGAHNSLLRFEDVRIVRDMRNSVNRLVNCETANLNKTIGASLRQVENIKLIDERIGLDALPEKLREIAQLRIDYQEVTLKELGEMVSSGKISKSGINHRLRKLDEIAEQLRSGQSVSLK</sequence>
<dbReference type="EMBL" id="CP000002">
    <property type="protein sequence ID" value="AAU25172.1"/>
    <property type="molecule type" value="Genomic_DNA"/>
</dbReference>
<dbReference type="EMBL" id="AE017333">
    <property type="protein sequence ID" value="AAU42542.1"/>
    <property type="molecule type" value="Genomic_DNA"/>
</dbReference>
<dbReference type="RefSeq" id="WP_003185576.1">
    <property type="nucleotide sequence ID" value="NC_006322.1"/>
</dbReference>
<dbReference type="SMR" id="Q65EH2"/>
<dbReference type="STRING" id="279010.BL03420"/>
<dbReference type="GeneID" id="92859698"/>
<dbReference type="KEGG" id="bld:BLi03723"/>
<dbReference type="KEGG" id="bli:BL03420"/>
<dbReference type="eggNOG" id="COG1481">
    <property type="taxonomic scope" value="Bacteria"/>
</dbReference>
<dbReference type="HOGENOM" id="CLU_053282_0_0_9"/>
<dbReference type="Proteomes" id="UP000000606">
    <property type="component" value="Chromosome"/>
</dbReference>
<dbReference type="GO" id="GO:0003677">
    <property type="term" value="F:DNA binding"/>
    <property type="evidence" value="ECO:0007669"/>
    <property type="project" value="UniProtKB-UniRule"/>
</dbReference>
<dbReference type="GO" id="GO:0051301">
    <property type="term" value="P:cell division"/>
    <property type="evidence" value="ECO:0007669"/>
    <property type="project" value="UniProtKB-UniRule"/>
</dbReference>
<dbReference type="GO" id="GO:0043937">
    <property type="term" value="P:regulation of sporulation"/>
    <property type="evidence" value="ECO:0007669"/>
    <property type="project" value="InterPro"/>
</dbReference>
<dbReference type="FunFam" id="3.10.28.10:FF:000002">
    <property type="entry name" value="Probable cell division protein WhiA"/>
    <property type="match status" value="1"/>
</dbReference>
<dbReference type="Gene3D" id="3.10.28.10">
    <property type="entry name" value="Homing endonucleases"/>
    <property type="match status" value="1"/>
</dbReference>
<dbReference type="HAMAP" id="MF_01420">
    <property type="entry name" value="HTH_type_WhiA"/>
    <property type="match status" value="1"/>
</dbReference>
<dbReference type="InterPro" id="IPR027434">
    <property type="entry name" value="Homing_endonucl"/>
</dbReference>
<dbReference type="InterPro" id="IPR018478">
    <property type="entry name" value="Sporu_reg_WhiA_N_dom"/>
</dbReference>
<dbReference type="InterPro" id="IPR003802">
    <property type="entry name" value="Sporulation_regulator_WhiA"/>
</dbReference>
<dbReference type="InterPro" id="IPR023054">
    <property type="entry name" value="Sporulation_regulator_WhiA_C"/>
</dbReference>
<dbReference type="InterPro" id="IPR039518">
    <property type="entry name" value="WhiA_LAGLIDADG_dom"/>
</dbReference>
<dbReference type="NCBIfam" id="TIGR00647">
    <property type="entry name" value="DNA_bind_WhiA"/>
    <property type="match status" value="1"/>
</dbReference>
<dbReference type="PANTHER" id="PTHR37307">
    <property type="entry name" value="CELL DIVISION PROTEIN WHIA-RELATED"/>
    <property type="match status" value="1"/>
</dbReference>
<dbReference type="PANTHER" id="PTHR37307:SF1">
    <property type="entry name" value="CELL DIVISION PROTEIN WHIA-RELATED"/>
    <property type="match status" value="1"/>
</dbReference>
<dbReference type="Pfam" id="PF02650">
    <property type="entry name" value="HTH_WhiA"/>
    <property type="match status" value="1"/>
</dbReference>
<dbReference type="Pfam" id="PF14527">
    <property type="entry name" value="LAGLIDADG_WhiA"/>
    <property type="match status" value="1"/>
</dbReference>
<dbReference type="Pfam" id="PF10298">
    <property type="entry name" value="WhiA_N"/>
    <property type="match status" value="1"/>
</dbReference>
<dbReference type="SUPFAM" id="SSF55608">
    <property type="entry name" value="Homing endonucleases"/>
    <property type="match status" value="1"/>
</dbReference>
<protein>
    <recommendedName>
        <fullName evidence="1">Probable cell division protein WhiA</fullName>
    </recommendedName>
</protein>
<keyword id="KW-0131">Cell cycle</keyword>
<keyword id="KW-0132">Cell division</keyword>
<keyword id="KW-0238">DNA-binding</keyword>
<keyword id="KW-1185">Reference proteome</keyword>
<reference key="1">
    <citation type="journal article" date="2004" name="J. Mol. Microbiol. Biotechnol.">
        <title>The complete genome sequence of Bacillus licheniformis DSM13, an organism with great industrial potential.</title>
        <authorList>
            <person name="Veith B."/>
            <person name="Herzberg C."/>
            <person name="Steckel S."/>
            <person name="Feesche J."/>
            <person name="Maurer K.H."/>
            <person name="Ehrenreich P."/>
            <person name="Baeumer S."/>
            <person name="Henne A."/>
            <person name="Liesegang H."/>
            <person name="Merkl R."/>
            <person name="Ehrenreich A."/>
            <person name="Gottschalk G."/>
        </authorList>
    </citation>
    <scope>NUCLEOTIDE SEQUENCE [LARGE SCALE GENOMIC DNA]</scope>
    <source>
        <strain>ATCC 14580 / DSM 13 / JCM 2505 / CCUG 7422 / NBRC 12200 / NCIMB 9375 / NCTC 10341 / NRRL NRS-1264 / Gibson 46</strain>
    </source>
</reference>
<reference key="2">
    <citation type="journal article" date="2004" name="Genome Biol.">
        <title>Complete genome sequence of the industrial bacterium Bacillus licheniformis and comparisons with closely related Bacillus species.</title>
        <authorList>
            <person name="Rey M.W."/>
            <person name="Ramaiya P."/>
            <person name="Nelson B.A."/>
            <person name="Brody-Karpin S.D."/>
            <person name="Zaretsky E.J."/>
            <person name="Tang M."/>
            <person name="Lopez de Leon A."/>
            <person name="Xiang H."/>
            <person name="Gusti V."/>
            <person name="Clausen I.G."/>
            <person name="Olsen P.B."/>
            <person name="Rasmussen M.D."/>
            <person name="Andersen J.T."/>
            <person name="Joergensen P.L."/>
            <person name="Larsen T.S."/>
            <person name="Sorokin A."/>
            <person name="Bolotin A."/>
            <person name="Lapidus A."/>
            <person name="Galleron N."/>
            <person name="Ehrlich S.D."/>
            <person name="Berka R.M."/>
        </authorList>
    </citation>
    <scope>NUCLEOTIDE SEQUENCE [LARGE SCALE GENOMIC DNA]</scope>
    <source>
        <strain>ATCC 14580 / DSM 13 / JCM 2505 / CCUG 7422 / NBRC 12200 / NCIMB 9375 / NCTC 10341 / NRRL NRS-1264 / Gibson 46</strain>
    </source>
</reference>
<accession>Q65EH2</accession>
<accession>Q62PY9</accession>
<gene>
    <name evidence="1" type="primary">whiA</name>
    <name type="ordered locus">BLi03723</name>
    <name type="ordered locus">BL03420</name>
</gene>